<gene>
    <name evidence="1" type="primary">aroE</name>
    <name type="ordered locus">COSY_0405</name>
</gene>
<keyword id="KW-0028">Amino-acid biosynthesis</keyword>
<keyword id="KW-0057">Aromatic amino acid biosynthesis</keyword>
<keyword id="KW-0521">NADP</keyword>
<keyword id="KW-0560">Oxidoreductase</keyword>
<keyword id="KW-1185">Reference proteome</keyword>
<evidence type="ECO:0000255" key="1">
    <source>
        <dbReference type="HAMAP-Rule" id="MF_00222"/>
    </source>
</evidence>
<comment type="function">
    <text evidence="1">Involved in the biosynthesis of the chorismate, which leads to the biosynthesis of aromatic amino acids. Catalyzes the reversible NADPH linked reduction of 3-dehydroshikimate (DHSA) to yield shikimate (SA).</text>
</comment>
<comment type="catalytic activity">
    <reaction evidence="1">
        <text>shikimate + NADP(+) = 3-dehydroshikimate + NADPH + H(+)</text>
        <dbReference type="Rhea" id="RHEA:17737"/>
        <dbReference type="ChEBI" id="CHEBI:15378"/>
        <dbReference type="ChEBI" id="CHEBI:16630"/>
        <dbReference type="ChEBI" id="CHEBI:36208"/>
        <dbReference type="ChEBI" id="CHEBI:57783"/>
        <dbReference type="ChEBI" id="CHEBI:58349"/>
        <dbReference type="EC" id="1.1.1.25"/>
    </reaction>
</comment>
<comment type="pathway">
    <text evidence="1">Metabolic intermediate biosynthesis; chorismate biosynthesis; chorismate from D-erythrose 4-phosphate and phosphoenolpyruvate: step 4/7.</text>
</comment>
<comment type="subunit">
    <text evidence="1">Homodimer.</text>
</comment>
<comment type="similarity">
    <text evidence="1">Belongs to the shikimate dehydrogenase family.</text>
</comment>
<reference key="1">
    <citation type="journal article" date="2007" name="Curr. Biol.">
        <title>Reduced genome of the thioautotrophic intracellular symbiont in a deep-sea clam, Calyptogena okutanii.</title>
        <authorList>
            <person name="Kuwahara H."/>
            <person name="Yoshida T."/>
            <person name="Takaki Y."/>
            <person name="Shimamura S."/>
            <person name="Nishi S."/>
            <person name="Harada M."/>
            <person name="Matsuyama K."/>
            <person name="Takishita K."/>
            <person name="Kawato M."/>
            <person name="Uematsu K."/>
            <person name="Fujiwara Y."/>
            <person name="Sato T."/>
            <person name="Kato C."/>
            <person name="Kitagawa M."/>
            <person name="Kato I."/>
            <person name="Maruyama T."/>
        </authorList>
    </citation>
    <scope>NUCLEOTIDE SEQUENCE [LARGE SCALE GENOMIC DNA]</scope>
    <source>
        <strain>HA</strain>
    </source>
</reference>
<name>AROE_VESOH</name>
<proteinExistence type="inferred from homology"/>
<organism>
    <name type="scientific">Vesicomyosocius okutanii subsp. Calyptogena okutanii (strain HA)</name>
    <dbReference type="NCBI Taxonomy" id="412965"/>
    <lineage>
        <taxon>Bacteria</taxon>
        <taxon>Pseudomonadati</taxon>
        <taxon>Pseudomonadota</taxon>
        <taxon>Gammaproteobacteria</taxon>
        <taxon>Candidatus Pseudothioglobaceae</taxon>
        <taxon>Candidatus Vesicomyosocius</taxon>
    </lineage>
</organism>
<accession>A5CWY3</accession>
<dbReference type="EC" id="1.1.1.25" evidence="1"/>
<dbReference type="EMBL" id="AP009247">
    <property type="protein sequence ID" value="BAF61524.1"/>
    <property type="molecule type" value="Genomic_DNA"/>
</dbReference>
<dbReference type="RefSeq" id="WP_011929794.1">
    <property type="nucleotide sequence ID" value="NC_009465.1"/>
</dbReference>
<dbReference type="SMR" id="A5CWY3"/>
<dbReference type="STRING" id="412965.COSY_0405"/>
<dbReference type="KEGG" id="vok:COSY_0405"/>
<dbReference type="eggNOG" id="COG0169">
    <property type="taxonomic scope" value="Bacteria"/>
</dbReference>
<dbReference type="HOGENOM" id="CLU_044063_2_1_6"/>
<dbReference type="OrthoDB" id="9776868at2"/>
<dbReference type="UniPathway" id="UPA00053">
    <property type="reaction ID" value="UER00087"/>
</dbReference>
<dbReference type="Proteomes" id="UP000000247">
    <property type="component" value="Chromosome"/>
</dbReference>
<dbReference type="GO" id="GO:0005829">
    <property type="term" value="C:cytosol"/>
    <property type="evidence" value="ECO:0007669"/>
    <property type="project" value="TreeGrafter"/>
</dbReference>
<dbReference type="GO" id="GO:0050661">
    <property type="term" value="F:NADP binding"/>
    <property type="evidence" value="ECO:0007669"/>
    <property type="project" value="InterPro"/>
</dbReference>
<dbReference type="GO" id="GO:0004764">
    <property type="term" value="F:shikimate 3-dehydrogenase (NADP+) activity"/>
    <property type="evidence" value="ECO:0007669"/>
    <property type="project" value="UniProtKB-UniRule"/>
</dbReference>
<dbReference type="GO" id="GO:0008652">
    <property type="term" value="P:amino acid biosynthetic process"/>
    <property type="evidence" value="ECO:0007669"/>
    <property type="project" value="UniProtKB-KW"/>
</dbReference>
<dbReference type="GO" id="GO:0009073">
    <property type="term" value="P:aromatic amino acid family biosynthetic process"/>
    <property type="evidence" value="ECO:0007669"/>
    <property type="project" value="UniProtKB-KW"/>
</dbReference>
<dbReference type="GO" id="GO:0009423">
    <property type="term" value="P:chorismate biosynthetic process"/>
    <property type="evidence" value="ECO:0007669"/>
    <property type="project" value="UniProtKB-UniRule"/>
</dbReference>
<dbReference type="GO" id="GO:0019632">
    <property type="term" value="P:shikimate metabolic process"/>
    <property type="evidence" value="ECO:0007669"/>
    <property type="project" value="InterPro"/>
</dbReference>
<dbReference type="CDD" id="cd01065">
    <property type="entry name" value="NAD_bind_Shikimate_DH"/>
    <property type="match status" value="1"/>
</dbReference>
<dbReference type="FunFam" id="3.40.50.10860:FF:000006">
    <property type="entry name" value="Shikimate dehydrogenase (NADP(+))"/>
    <property type="match status" value="1"/>
</dbReference>
<dbReference type="Gene3D" id="3.40.50.10860">
    <property type="entry name" value="Leucine Dehydrogenase, chain A, domain 1"/>
    <property type="match status" value="1"/>
</dbReference>
<dbReference type="Gene3D" id="3.40.50.720">
    <property type="entry name" value="NAD(P)-binding Rossmann-like Domain"/>
    <property type="match status" value="1"/>
</dbReference>
<dbReference type="HAMAP" id="MF_00222">
    <property type="entry name" value="Shikimate_DH_AroE"/>
    <property type="match status" value="1"/>
</dbReference>
<dbReference type="InterPro" id="IPR046346">
    <property type="entry name" value="Aminoacid_DH-like_N_sf"/>
</dbReference>
<dbReference type="InterPro" id="IPR036291">
    <property type="entry name" value="NAD(P)-bd_dom_sf"/>
</dbReference>
<dbReference type="InterPro" id="IPR041121">
    <property type="entry name" value="SDH_C"/>
</dbReference>
<dbReference type="InterPro" id="IPR011342">
    <property type="entry name" value="Shikimate_DH"/>
</dbReference>
<dbReference type="InterPro" id="IPR013708">
    <property type="entry name" value="Shikimate_DH-bd_N"/>
</dbReference>
<dbReference type="InterPro" id="IPR022893">
    <property type="entry name" value="Shikimate_DH_fam"/>
</dbReference>
<dbReference type="InterPro" id="IPR006151">
    <property type="entry name" value="Shikm_DH/Glu-tRNA_Rdtase"/>
</dbReference>
<dbReference type="NCBIfam" id="TIGR00507">
    <property type="entry name" value="aroE"/>
    <property type="match status" value="1"/>
</dbReference>
<dbReference type="NCBIfam" id="NF001310">
    <property type="entry name" value="PRK00258.1-2"/>
    <property type="match status" value="1"/>
</dbReference>
<dbReference type="PANTHER" id="PTHR21089:SF1">
    <property type="entry name" value="BIFUNCTIONAL 3-DEHYDROQUINATE DEHYDRATASE_SHIKIMATE DEHYDROGENASE, CHLOROPLASTIC"/>
    <property type="match status" value="1"/>
</dbReference>
<dbReference type="PANTHER" id="PTHR21089">
    <property type="entry name" value="SHIKIMATE DEHYDROGENASE"/>
    <property type="match status" value="1"/>
</dbReference>
<dbReference type="Pfam" id="PF18317">
    <property type="entry name" value="SDH_C"/>
    <property type="match status" value="1"/>
</dbReference>
<dbReference type="Pfam" id="PF01488">
    <property type="entry name" value="Shikimate_DH"/>
    <property type="match status" value="1"/>
</dbReference>
<dbReference type="Pfam" id="PF08501">
    <property type="entry name" value="Shikimate_dh_N"/>
    <property type="match status" value="1"/>
</dbReference>
<dbReference type="SUPFAM" id="SSF53223">
    <property type="entry name" value="Aminoacid dehydrogenase-like, N-terminal domain"/>
    <property type="match status" value="1"/>
</dbReference>
<dbReference type="SUPFAM" id="SSF51735">
    <property type="entry name" value="NAD(P)-binding Rossmann-fold domains"/>
    <property type="match status" value="1"/>
</dbReference>
<protein>
    <recommendedName>
        <fullName evidence="1">Shikimate dehydrogenase (NADP(+))</fullName>
        <shortName evidence="1">SDH</shortName>
        <ecNumber evidence="1">1.1.1.25</ecNumber>
    </recommendedName>
</protein>
<feature type="chain" id="PRO_1000021358" description="Shikimate dehydrogenase (NADP(+))">
    <location>
        <begin position="1"/>
        <end position="267"/>
    </location>
</feature>
<feature type="active site" description="Proton acceptor" evidence="1">
    <location>
        <position position="65"/>
    </location>
</feature>
<feature type="binding site" evidence="1">
    <location>
        <begin position="14"/>
        <end position="16"/>
    </location>
    <ligand>
        <name>shikimate</name>
        <dbReference type="ChEBI" id="CHEBI:36208"/>
    </ligand>
</feature>
<feature type="binding site" evidence="1">
    <location>
        <position position="61"/>
    </location>
    <ligand>
        <name>shikimate</name>
        <dbReference type="ChEBI" id="CHEBI:36208"/>
    </ligand>
</feature>
<feature type="binding site" evidence="1">
    <location>
        <position position="86"/>
    </location>
    <ligand>
        <name>shikimate</name>
        <dbReference type="ChEBI" id="CHEBI:36208"/>
    </ligand>
</feature>
<feature type="binding site" evidence="1">
    <location>
        <position position="101"/>
    </location>
    <ligand>
        <name>shikimate</name>
        <dbReference type="ChEBI" id="CHEBI:36208"/>
    </ligand>
</feature>
<feature type="binding site" evidence="1">
    <location>
        <begin position="126"/>
        <end position="130"/>
    </location>
    <ligand>
        <name>NADP(+)</name>
        <dbReference type="ChEBI" id="CHEBI:58349"/>
    </ligand>
</feature>
<feature type="binding site" evidence="1">
    <location>
        <begin position="150"/>
        <end position="155"/>
    </location>
    <ligand>
        <name>NADP(+)</name>
        <dbReference type="ChEBI" id="CHEBI:58349"/>
    </ligand>
</feature>
<feature type="binding site" evidence="1">
    <location>
        <position position="213"/>
    </location>
    <ligand>
        <name>NADP(+)</name>
        <dbReference type="ChEBI" id="CHEBI:58349"/>
    </ligand>
</feature>
<feature type="binding site" evidence="1">
    <location>
        <position position="215"/>
    </location>
    <ligand>
        <name>shikimate</name>
        <dbReference type="ChEBI" id="CHEBI:36208"/>
    </ligand>
</feature>
<feature type="binding site" evidence="1">
    <location>
        <position position="236"/>
    </location>
    <ligand>
        <name>NADP(+)</name>
        <dbReference type="ChEBI" id="CHEBI:58349"/>
    </ligand>
</feature>
<sequence>MYKFAVFGNPINHSLSPNIQNQFAKQTGFEISYDKILAPVDDFVSSVQAFINQGANGFNITVPFKLDAFKFANELTLNAKIAGSVNTIKIEADKIIGENTDGIGLIKDLTHNIGIKLKNKVILILGAGGATQGILFPILKQKPNQVIISNRTHSKAIRLAKNFSKFGNTCSFSLNKIKYKSVDIIINATSASFDGRIPNIAFSIANNAVCYDLMYGYQTPFMSWAKTNHAKMISDGLGMLVEQAAIAFEFWTGAKPDTKKVLSNLRR</sequence>